<evidence type="ECO:0000255" key="1">
    <source>
        <dbReference type="HAMAP-Rule" id="MF_03104"/>
    </source>
</evidence>
<evidence type="ECO:0000256" key="2">
    <source>
        <dbReference type="SAM" id="MobiDB-lite"/>
    </source>
</evidence>
<sequence>MSIDLNWETVTGGPDGQELADSIRDFIHTKFQSVPLPRFIKSVTVHDFQFGTIPPEIELKDITDPLPDFYEENLDSDLASESGSEEDEEEIADDRRRRQTEAVLTGGAGAHNPSALPPHLSLGGLGGLGGLGAGGSRNGGDIGSPFLRVNTPGIPGGTSNLHYFHSQFATGLSGTQTPLAAVAGAHHLNSAAWLEGHGHSSSAPNLHQYGAPDFGGVDGQSTAPVPNQDLRRPLLQQPPSTHRRNPSQSSIDLNPSLGLTPPSPTVLSVPPFPPSSTGGPSPPPGLAKPHHPHHPHHHHAHHAHPLLREKHSVSTLAASAGPPSRPPTRDKTTPSHHPDPEDVHAPNTTTTNKQRSTSPATSSPLATSAQEQAEEEEEEEKRKLREKKVDDMQAVFRIRYAGDIKLLLTADILLDYPMPSFVGIPVRLSITGLTFDGVGVLAKIRKRVHFCFLSPEDAVAAVGQGENEVDGGEGDKQTGFKSPPGGGNGLGATKLGGLLQEIRVESEIGQRESGKQSLKNVGKVERFVLEQVRRIFEEEFVYPSYWTFLV</sequence>
<organism>
    <name type="scientific">Podospora anserina (strain S / ATCC MYA-4624 / DSM 980 / FGSC 10383)</name>
    <name type="common">Pleurage anserina</name>
    <dbReference type="NCBI Taxonomy" id="515849"/>
    <lineage>
        <taxon>Eukaryota</taxon>
        <taxon>Fungi</taxon>
        <taxon>Dikarya</taxon>
        <taxon>Ascomycota</taxon>
        <taxon>Pezizomycotina</taxon>
        <taxon>Sordariomycetes</taxon>
        <taxon>Sordariomycetidae</taxon>
        <taxon>Sordariales</taxon>
        <taxon>Podosporaceae</taxon>
        <taxon>Podospora</taxon>
        <taxon>Podospora anserina</taxon>
    </lineage>
</organism>
<gene>
    <name evidence="1" type="primary">MDM12</name>
    <name type="ordered locus">Pa_1_3220</name>
    <name type="ORF">PODANS_1_3220</name>
</gene>
<proteinExistence type="inferred from homology"/>
<name>MDM12_PODAN</name>
<keyword id="KW-0256">Endoplasmic reticulum</keyword>
<keyword id="KW-0445">Lipid transport</keyword>
<keyword id="KW-0446">Lipid-binding</keyword>
<keyword id="KW-0472">Membrane</keyword>
<keyword id="KW-0496">Mitochondrion</keyword>
<keyword id="KW-1000">Mitochondrion outer membrane</keyword>
<keyword id="KW-1185">Reference proteome</keyword>
<keyword id="KW-0813">Transport</keyword>
<protein>
    <recommendedName>
        <fullName evidence="1">Mitochondrial distribution and morphology protein 12</fullName>
    </recommendedName>
    <alternativeName>
        <fullName evidence="1">Mitochondrial inheritance component MDM12</fullName>
    </alternativeName>
</protein>
<dbReference type="EMBL" id="CU633438">
    <property type="protein sequence ID" value="CAP59999.1"/>
    <property type="molecule type" value="Genomic_DNA"/>
</dbReference>
<dbReference type="EMBL" id="FO904936">
    <property type="protein sequence ID" value="CDP22640.1"/>
    <property type="molecule type" value="Genomic_DNA"/>
</dbReference>
<dbReference type="RefSeq" id="XP_001912517.1">
    <property type="nucleotide sequence ID" value="XM_001912482.1"/>
</dbReference>
<dbReference type="SMR" id="B2AA87"/>
<dbReference type="FunCoup" id="B2AA87">
    <property type="interactions" value="43"/>
</dbReference>
<dbReference type="STRING" id="515849.B2AA87"/>
<dbReference type="GeneID" id="6197475"/>
<dbReference type="KEGG" id="pan:PODANSg09566"/>
<dbReference type="VEuPathDB" id="FungiDB:PODANS_1_3220"/>
<dbReference type="eggNOG" id="ENOG502QQS2">
    <property type="taxonomic scope" value="Eukaryota"/>
</dbReference>
<dbReference type="HOGENOM" id="CLU_026794_0_0_1"/>
<dbReference type="InParanoid" id="B2AA87"/>
<dbReference type="OrthoDB" id="3356905at2759"/>
<dbReference type="Proteomes" id="UP000001197">
    <property type="component" value="Chromosome 1"/>
</dbReference>
<dbReference type="GO" id="GO:0005789">
    <property type="term" value="C:endoplasmic reticulum membrane"/>
    <property type="evidence" value="ECO:0007669"/>
    <property type="project" value="UniProtKB-SubCell"/>
</dbReference>
<dbReference type="GO" id="GO:0032865">
    <property type="term" value="C:ERMES complex"/>
    <property type="evidence" value="ECO:0007669"/>
    <property type="project" value="UniProtKB-UniRule"/>
</dbReference>
<dbReference type="GO" id="GO:0008289">
    <property type="term" value="F:lipid binding"/>
    <property type="evidence" value="ECO:0007669"/>
    <property type="project" value="UniProtKB-KW"/>
</dbReference>
<dbReference type="GO" id="GO:0000002">
    <property type="term" value="P:mitochondrial genome maintenance"/>
    <property type="evidence" value="ECO:0007669"/>
    <property type="project" value="UniProtKB-UniRule"/>
</dbReference>
<dbReference type="GO" id="GO:1990456">
    <property type="term" value="P:mitochondrion-endoplasmic reticulum membrane tethering"/>
    <property type="evidence" value="ECO:0007669"/>
    <property type="project" value="TreeGrafter"/>
</dbReference>
<dbReference type="GO" id="GO:0015914">
    <property type="term" value="P:phospholipid transport"/>
    <property type="evidence" value="ECO:0007669"/>
    <property type="project" value="TreeGrafter"/>
</dbReference>
<dbReference type="GO" id="GO:0045040">
    <property type="term" value="P:protein insertion into mitochondrial outer membrane"/>
    <property type="evidence" value="ECO:0007669"/>
    <property type="project" value="UniProtKB-UniRule"/>
</dbReference>
<dbReference type="CDD" id="cd21672">
    <property type="entry name" value="SMP_Mdm12"/>
    <property type="match status" value="1"/>
</dbReference>
<dbReference type="HAMAP" id="MF_03104">
    <property type="entry name" value="Mdm12"/>
    <property type="match status" value="1"/>
</dbReference>
<dbReference type="InterPro" id="IPR027532">
    <property type="entry name" value="Mdm12"/>
</dbReference>
<dbReference type="InterPro" id="IPR031468">
    <property type="entry name" value="SMP_LBD"/>
</dbReference>
<dbReference type="PANTHER" id="PTHR28204">
    <property type="entry name" value="MITOCHONDRIAL DISTRIBUTION AND MORPHOLOGY PROTEIN 12"/>
    <property type="match status" value="1"/>
</dbReference>
<dbReference type="PANTHER" id="PTHR28204:SF1">
    <property type="entry name" value="MITOCHONDRIAL DISTRIBUTION AND MORPHOLOGY PROTEIN 12"/>
    <property type="match status" value="1"/>
</dbReference>
<dbReference type="PROSITE" id="PS51847">
    <property type="entry name" value="SMP"/>
    <property type="match status" value="1"/>
</dbReference>
<feature type="chain" id="PRO_0000384306" description="Mitochondrial distribution and morphology protein 12">
    <location>
        <begin position="1"/>
        <end position="550"/>
    </location>
</feature>
<feature type="domain" description="SMP-LTD" evidence="1">
    <location>
        <begin position="1"/>
        <end position="550"/>
    </location>
</feature>
<feature type="region of interest" description="Disordered" evidence="2">
    <location>
        <begin position="76"/>
        <end position="97"/>
    </location>
</feature>
<feature type="region of interest" description="Disordered" evidence="2">
    <location>
        <begin position="196"/>
        <end position="386"/>
    </location>
</feature>
<feature type="region of interest" description="Disordered" evidence="2">
    <location>
        <begin position="466"/>
        <end position="489"/>
    </location>
</feature>
<feature type="compositionally biased region" description="Acidic residues" evidence="2">
    <location>
        <begin position="83"/>
        <end position="92"/>
    </location>
</feature>
<feature type="compositionally biased region" description="Pro residues" evidence="2">
    <location>
        <begin position="270"/>
        <end position="286"/>
    </location>
</feature>
<feature type="compositionally biased region" description="Basic residues" evidence="2">
    <location>
        <begin position="288"/>
        <end position="305"/>
    </location>
</feature>
<feature type="compositionally biased region" description="Basic and acidic residues" evidence="2">
    <location>
        <begin position="327"/>
        <end position="344"/>
    </location>
</feature>
<feature type="compositionally biased region" description="Polar residues" evidence="2">
    <location>
        <begin position="346"/>
        <end position="355"/>
    </location>
</feature>
<feature type="compositionally biased region" description="Low complexity" evidence="2">
    <location>
        <begin position="356"/>
        <end position="371"/>
    </location>
</feature>
<accession>B2AA87</accession>
<accession>A0A090C8M6</accession>
<comment type="function">
    <text evidence="1">Component of the ERMES/MDM complex, which serves as a molecular tether to connect the endoplasmic reticulum (ER) and mitochondria. Components of this complex are involved in the control of mitochondrial shape and protein biogenesis, and function in nonvesicular lipid trafficking between the ER and mitochondria. MDM12 is required for the interaction of the ER-resident membrane protein MMM1 and the outer mitochondrial membrane-resident beta-barrel protein MDM10. The MDM12-MMM1 subcomplex functions in the major beta-barrel assembly pathway that is responsible for biogenesis of all mitochondrial outer membrane beta-barrel proteins, and acts in a late step after the SAM complex. The MDM10-MDM12-MMM1 subcomplex further acts in the TOM40-specific pathway after the action of the MDM12-MMM1 complex. Essential for establishing and maintaining the structure of mitochondria and maintenance of mtDNA nucleoids.</text>
</comment>
<comment type="subunit">
    <text evidence="1">Component of the ER-mitochondria encounter structure (ERMES) or MDM complex, composed of MMM1, MDM10, MDM12 and MDM34. A MMM1 homodimer associates with one molecule of MDM12 on each side in a pairwise head-to-tail manner, and the SMP-LTD domains of MMM1 and MDM12 generate a continuous hydrophobic tunnel for phospholipid trafficking.</text>
</comment>
<comment type="subcellular location">
    <subcellularLocation>
        <location evidence="1">Mitochondrion outer membrane</location>
        <topology evidence="1">Peripheral membrane protein</topology>
        <orientation evidence="1">Cytoplasmic side</orientation>
    </subcellularLocation>
    <subcellularLocation>
        <location evidence="1">Endoplasmic reticulum membrane</location>
        <topology evidence="1">Peripheral membrane protein</topology>
        <orientation evidence="1">Cytoplasmic side</orientation>
    </subcellularLocation>
    <text evidence="1">The ERMES/MDM complex localizes to a few discrete foci (around 10 per single cell), that represent mitochondria-endoplasmic reticulum junctions. These foci are often found next to mtDNA nucleoids.</text>
</comment>
<comment type="domain">
    <text evidence="1">The SMP-LTD domain is a barrel-like domain that can bind various types of glycerophospholipids in its interior and mediate their transfer between two adjacent bilayers.</text>
</comment>
<comment type="similarity">
    <text evidence="1">Belongs to the MDM12 family.</text>
</comment>
<reference key="1">
    <citation type="journal article" date="2008" name="Genome Biol.">
        <title>The genome sequence of the model ascomycete fungus Podospora anserina.</title>
        <authorList>
            <person name="Espagne E."/>
            <person name="Lespinet O."/>
            <person name="Malagnac F."/>
            <person name="Da Silva C."/>
            <person name="Jaillon O."/>
            <person name="Porcel B.M."/>
            <person name="Couloux A."/>
            <person name="Aury J.-M."/>
            <person name="Segurens B."/>
            <person name="Poulain J."/>
            <person name="Anthouard V."/>
            <person name="Grossetete S."/>
            <person name="Khalili H."/>
            <person name="Coppin E."/>
            <person name="Dequard-Chablat M."/>
            <person name="Picard M."/>
            <person name="Contamine V."/>
            <person name="Arnaise S."/>
            <person name="Bourdais A."/>
            <person name="Berteaux-Lecellier V."/>
            <person name="Gautheret D."/>
            <person name="de Vries R.P."/>
            <person name="Battaglia E."/>
            <person name="Coutinho P.M."/>
            <person name="Danchin E.G.J."/>
            <person name="Henrissat B."/>
            <person name="El Khoury R."/>
            <person name="Sainsard-Chanet A."/>
            <person name="Boivin A."/>
            <person name="Pinan-Lucarre B."/>
            <person name="Sellem C.H."/>
            <person name="Debuchy R."/>
            <person name="Wincker P."/>
            <person name="Weissenbach J."/>
            <person name="Silar P."/>
        </authorList>
    </citation>
    <scope>NUCLEOTIDE SEQUENCE [LARGE SCALE GENOMIC DNA]</scope>
    <source>
        <strain>S / ATCC MYA-4624 / DSM 980 / FGSC 10383</strain>
    </source>
</reference>
<reference key="2">
    <citation type="journal article" date="2014" name="Genetics">
        <title>Maintaining two mating types: Structure of the mating type locus and its role in heterokaryosis in Podospora anserina.</title>
        <authorList>
            <person name="Grognet P."/>
            <person name="Bidard F."/>
            <person name="Kuchly C."/>
            <person name="Tong L.C.H."/>
            <person name="Coppin E."/>
            <person name="Benkhali J.A."/>
            <person name="Couloux A."/>
            <person name="Wincker P."/>
            <person name="Debuchy R."/>
            <person name="Silar P."/>
        </authorList>
    </citation>
    <scope>GENOME REANNOTATION</scope>
    <source>
        <strain>S / ATCC MYA-4624 / DSM 980 / FGSC 10383</strain>
    </source>
</reference>